<accession>B2V017</accession>
<reference key="1">
    <citation type="submission" date="2008-05" db="EMBL/GenBank/DDBJ databases">
        <title>Complete genome sequence of Clostridium botulinum E3 str. Alaska E43.</title>
        <authorList>
            <person name="Brinkac L.M."/>
            <person name="Brown J.L."/>
            <person name="Bruce D."/>
            <person name="Detter C."/>
            <person name="Munk C."/>
            <person name="Smith L.A."/>
            <person name="Smith T.J."/>
            <person name="Sutton G."/>
            <person name="Brettin T.S."/>
        </authorList>
    </citation>
    <scope>NUCLEOTIDE SEQUENCE [LARGE SCALE GENOMIC DNA]</scope>
    <source>
        <strain>Alaska E43 / Type E3</strain>
    </source>
</reference>
<gene>
    <name evidence="1" type="primary">ung</name>
    <name type="ordered locus">CLH_3126</name>
</gene>
<proteinExistence type="inferred from homology"/>
<keyword id="KW-0963">Cytoplasm</keyword>
<keyword id="KW-0227">DNA damage</keyword>
<keyword id="KW-0234">DNA repair</keyword>
<keyword id="KW-0378">Hydrolase</keyword>
<name>UNG_CLOBA</name>
<dbReference type="EC" id="3.2.2.27" evidence="1"/>
<dbReference type="EMBL" id="CP001078">
    <property type="protein sequence ID" value="ACD53064.1"/>
    <property type="molecule type" value="Genomic_DNA"/>
</dbReference>
<dbReference type="RefSeq" id="WP_012423798.1">
    <property type="nucleotide sequence ID" value="NC_010723.1"/>
</dbReference>
<dbReference type="SMR" id="B2V017"/>
<dbReference type="KEGG" id="cbt:CLH_3126"/>
<dbReference type="HOGENOM" id="CLU_032162_3_1_9"/>
<dbReference type="GO" id="GO:0005737">
    <property type="term" value="C:cytoplasm"/>
    <property type="evidence" value="ECO:0007669"/>
    <property type="project" value="UniProtKB-SubCell"/>
</dbReference>
<dbReference type="GO" id="GO:0004844">
    <property type="term" value="F:uracil DNA N-glycosylase activity"/>
    <property type="evidence" value="ECO:0007669"/>
    <property type="project" value="UniProtKB-UniRule"/>
</dbReference>
<dbReference type="GO" id="GO:0097510">
    <property type="term" value="P:base-excision repair, AP site formation via deaminated base removal"/>
    <property type="evidence" value="ECO:0007669"/>
    <property type="project" value="TreeGrafter"/>
</dbReference>
<dbReference type="CDD" id="cd10027">
    <property type="entry name" value="UDG-F1-like"/>
    <property type="match status" value="1"/>
</dbReference>
<dbReference type="FunFam" id="3.40.470.10:FF:000001">
    <property type="entry name" value="Uracil-DNA glycosylase"/>
    <property type="match status" value="1"/>
</dbReference>
<dbReference type="Gene3D" id="3.40.470.10">
    <property type="entry name" value="Uracil-DNA glycosylase-like domain"/>
    <property type="match status" value="1"/>
</dbReference>
<dbReference type="HAMAP" id="MF_00148">
    <property type="entry name" value="UDG"/>
    <property type="match status" value="1"/>
</dbReference>
<dbReference type="InterPro" id="IPR002043">
    <property type="entry name" value="UDG_fam1"/>
</dbReference>
<dbReference type="InterPro" id="IPR018085">
    <property type="entry name" value="Ura-DNA_Glyclase_AS"/>
</dbReference>
<dbReference type="InterPro" id="IPR005122">
    <property type="entry name" value="Uracil-DNA_glycosylase-like"/>
</dbReference>
<dbReference type="InterPro" id="IPR036895">
    <property type="entry name" value="Uracil-DNA_glycosylase-like_sf"/>
</dbReference>
<dbReference type="NCBIfam" id="NF003588">
    <property type="entry name" value="PRK05254.1-1"/>
    <property type="match status" value="1"/>
</dbReference>
<dbReference type="NCBIfam" id="NF003589">
    <property type="entry name" value="PRK05254.1-2"/>
    <property type="match status" value="1"/>
</dbReference>
<dbReference type="NCBIfam" id="NF003591">
    <property type="entry name" value="PRK05254.1-4"/>
    <property type="match status" value="1"/>
</dbReference>
<dbReference type="NCBIfam" id="NF003592">
    <property type="entry name" value="PRK05254.1-5"/>
    <property type="match status" value="1"/>
</dbReference>
<dbReference type="NCBIfam" id="TIGR00628">
    <property type="entry name" value="ung"/>
    <property type="match status" value="1"/>
</dbReference>
<dbReference type="PANTHER" id="PTHR11264">
    <property type="entry name" value="URACIL-DNA GLYCOSYLASE"/>
    <property type="match status" value="1"/>
</dbReference>
<dbReference type="PANTHER" id="PTHR11264:SF0">
    <property type="entry name" value="URACIL-DNA GLYCOSYLASE"/>
    <property type="match status" value="1"/>
</dbReference>
<dbReference type="Pfam" id="PF03167">
    <property type="entry name" value="UDG"/>
    <property type="match status" value="1"/>
</dbReference>
<dbReference type="SMART" id="SM00986">
    <property type="entry name" value="UDG"/>
    <property type="match status" value="1"/>
</dbReference>
<dbReference type="SMART" id="SM00987">
    <property type="entry name" value="UreE_C"/>
    <property type="match status" value="1"/>
</dbReference>
<dbReference type="SUPFAM" id="SSF52141">
    <property type="entry name" value="Uracil-DNA glycosylase-like"/>
    <property type="match status" value="1"/>
</dbReference>
<dbReference type="PROSITE" id="PS00130">
    <property type="entry name" value="U_DNA_GLYCOSYLASE"/>
    <property type="match status" value="1"/>
</dbReference>
<comment type="function">
    <text evidence="1">Excises uracil residues from the DNA which can arise as a result of misincorporation of dUMP residues by DNA polymerase or due to deamination of cytosine.</text>
</comment>
<comment type="catalytic activity">
    <reaction evidence="1">
        <text>Hydrolyzes single-stranded DNA or mismatched double-stranded DNA and polynucleotides, releasing free uracil.</text>
        <dbReference type="EC" id="3.2.2.27"/>
    </reaction>
</comment>
<comment type="subcellular location">
    <subcellularLocation>
        <location evidence="1">Cytoplasm</location>
    </subcellularLocation>
</comment>
<comment type="similarity">
    <text evidence="1">Belongs to the uracil-DNA glycosylase (UDG) superfamily. UNG family.</text>
</comment>
<evidence type="ECO:0000255" key="1">
    <source>
        <dbReference type="HAMAP-Rule" id="MF_00148"/>
    </source>
</evidence>
<organism>
    <name type="scientific">Clostridium botulinum (strain Alaska E43 / Type E3)</name>
    <dbReference type="NCBI Taxonomy" id="508767"/>
    <lineage>
        <taxon>Bacteria</taxon>
        <taxon>Bacillati</taxon>
        <taxon>Bacillota</taxon>
        <taxon>Clostridia</taxon>
        <taxon>Eubacteriales</taxon>
        <taxon>Clostridiaceae</taxon>
        <taxon>Clostridium</taxon>
    </lineage>
</organism>
<protein>
    <recommendedName>
        <fullName evidence="1">Uracil-DNA glycosylase</fullName>
        <shortName evidence="1">UDG</shortName>
        <ecNumber evidence="1">3.2.2.27</ecNumber>
    </recommendedName>
</protein>
<sequence>MNNILKNDWNNYIGNEFEKDYYLKLRKNLAQEYKTKTIYPDMYNIFNALHYTAFDDVKVVILGQDPYHGPNQAHGLSFSVNPGVRTPPSLLNIYKELKDDIGCYIPNNGYLKKWADQGVLLLNTVLTVRAGEANSHKNIGWQIFTDNIIKVLNTREKPIVFILWGNNAIRKEELITNPKHHIIKSVHPSPLSASRGFFGSKPFSKTNEFLKNDNEIPIDWQIENL</sequence>
<feature type="chain" id="PRO_1000096572" description="Uracil-DNA glycosylase">
    <location>
        <begin position="1"/>
        <end position="225"/>
    </location>
</feature>
<feature type="active site" description="Proton acceptor" evidence="1">
    <location>
        <position position="65"/>
    </location>
</feature>